<proteinExistence type="evidence at protein level"/>
<protein>
    <recommendedName>
        <fullName evidence="8">Liposome tubulation protein MamY</fullName>
    </recommendedName>
</protein>
<organism>
    <name type="scientific">Magnetospirillum gryphiswaldense (strain DSM 6361 / JCM 21280 / NBRC 15271 / MSR-1)</name>
    <dbReference type="NCBI Taxonomy" id="431944"/>
    <lineage>
        <taxon>Bacteria</taxon>
        <taxon>Pseudomonadati</taxon>
        <taxon>Pseudomonadota</taxon>
        <taxon>Alphaproteobacteria</taxon>
        <taxon>Rhodospirillales</taxon>
        <taxon>Rhodospirillaceae</taxon>
        <taxon>Magnetospirillum</taxon>
    </lineage>
</organism>
<dbReference type="EMBL" id="AM085146">
    <property type="protein sequence ID" value="CAJ30171.1"/>
    <property type="molecule type" value="Genomic_DNA"/>
</dbReference>
<dbReference type="EMBL" id="CU459003">
    <property type="protein sequence ID" value="CAM78082.1"/>
    <property type="molecule type" value="Genomic_DNA"/>
</dbReference>
<dbReference type="EMBL" id="HG794546">
    <property type="protein sequence ID" value="CDK99536.1"/>
    <property type="molecule type" value="Genomic_DNA"/>
</dbReference>
<dbReference type="RefSeq" id="WP_024080539.1">
    <property type="nucleotide sequence ID" value="NZ_CP027526.1"/>
</dbReference>
<dbReference type="STRING" id="1430440.MGMSRv2__2321"/>
<dbReference type="KEGG" id="mgry:MSR1_03880"/>
<dbReference type="KEGG" id="mgy:MGMSRv2__2321"/>
<dbReference type="HOGENOM" id="CLU_882247_0_0_5"/>
<dbReference type="Proteomes" id="UP000018922">
    <property type="component" value="Chromosome I"/>
</dbReference>
<dbReference type="GO" id="GO:0110146">
    <property type="term" value="C:magnetosome membrane"/>
    <property type="evidence" value="ECO:0000250"/>
    <property type="project" value="UniProtKB"/>
</dbReference>
<dbReference type="GO" id="GO:0008289">
    <property type="term" value="F:lipid binding"/>
    <property type="evidence" value="ECO:0007669"/>
    <property type="project" value="UniProtKB-KW"/>
</dbReference>
<dbReference type="NCBIfam" id="NF040997">
    <property type="entry name" value="MamY"/>
    <property type="match status" value="1"/>
</dbReference>
<sequence>MLMNFVNNVSKTINGGARIVYVGSFSWAVLSLLFVTAFSGWNNIFSMLPHEIFILVLTISLPIALIVLIFMLSQIVRTVESVKSEISTLSQRDPVSEEAVTMLADLFREHRDAVAAQVAAQVEATAQLVQINQDNRALAAPSPDSGDENPLALLAQMFREYRETVTAQLEAQISATTQLVEASRDSRDGIVDELRSQRVLSQEITQELSHIAQSRNVVPVAEPGLDPSQRIDRMRALAEVLGLALNDLSMTATQLLSEHLNAAHGDREGTQKFISTLTNAYFAGDKNVFFRSLVSEVVNHSDQLQQCAIGAENVRQQISKILREAREIRSLVSACDPNDLVRIVFEDGELWALEKALAEHFLIDGTPISDA</sequence>
<accession>V6F5F3</accession>
<accession>Q3BK69</accession>
<reference key="1">
    <citation type="journal article" date="2005" name="J. Bacteriol.">
        <title>A hypervariable 130-kilobase genomic region of Magnetospirillum gryphiswaldense comprises a magnetosome island which undergoes frequent rearrangements during stationary growth.</title>
        <authorList>
            <person name="Ullrich S."/>
            <person name="Kube M."/>
            <person name="Schuebbe S."/>
            <person name="Reinhardt R."/>
            <person name="Schueler D."/>
        </authorList>
    </citation>
    <scope>NUCLEOTIDE SEQUENCE [GENOMIC DNA]</scope>
    <source>
        <strain>DSM 6361 / JCM 21280 / NBRC 15271 / MSR-1</strain>
    </source>
</reference>
<reference key="2">
    <citation type="journal article" date="2007" name="J. Bacteriol.">
        <title>Comparative genome analysis of four magnetotactic bacteria reveals a complex set of group-specific genes implicated in magnetosome biomineralization and function.</title>
        <authorList>
            <person name="Richter M."/>
            <person name="Kube M."/>
            <person name="Bazylinski D.A."/>
            <person name="Lombardot T."/>
            <person name="Gloeckner F.O."/>
            <person name="Reinhardt R."/>
            <person name="Schueler D."/>
        </authorList>
    </citation>
    <scope>NUCLEOTIDE SEQUENCE [LARGE SCALE GENOMIC DNA]</scope>
    <source>
        <strain>DSM 6361 / JCM 21280 / NBRC 15271 / MSR-1</strain>
    </source>
</reference>
<reference key="3">
    <citation type="journal article" date="2014" name="Genome Announc.">
        <title>Complete genome sequence of Magnetospirillum gryphiswaldense MSR-1.</title>
        <authorList>
            <person name="Wang X."/>
            <person name="Wang Q."/>
            <person name="Zhang W."/>
            <person name="Wang Y."/>
            <person name="Li L."/>
            <person name="Wen T."/>
            <person name="Zhang T."/>
            <person name="Zhang Y."/>
            <person name="Xu J."/>
            <person name="Hu J."/>
            <person name="Li S."/>
            <person name="Liu L."/>
            <person name="Liu J."/>
            <person name="Jiang W."/>
            <person name="Tian J."/>
            <person name="Li Y."/>
            <person name="Schuler D."/>
            <person name="Wang L."/>
            <person name="Li J."/>
        </authorList>
    </citation>
    <scope>NUCLEOTIDE SEQUENCE [LARGE SCALE GENOMIC DNA]</scope>
    <source>
        <strain>DSM 6361 / JCM 21280 / NBRC 15271 / MSR-1</strain>
    </source>
</reference>
<reference key="4">
    <citation type="journal article" date="2010" name="J. Bacteriol.">
        <title>Deletion of the ftsZ-like gene results in the production of superparamagnetic magnetite magnetosomes in Magnetospirillum gryphiswaldense.</title>
        <authorList>
            <person name="Ding Y."/>
            <person name="Li J."/>
            <person name="Liu J."/>
            <person name="Yang J."/>
            <person name="Jiang W."/>
            <person name="Tian J."/>
            <person name="Li Y."/>
            <person name="Pan Y."/>
            <person name="Li J."/>
        </authorList>
    </citation>
    <scope>INDUCTION</scope>
    <source>
        <strain>DSM 6361 / JCM 21280 / NBRC 15271 / MSR-1</strain>
    </source>
</reference>
<reference key="5">
    <citation type="journal article" date="2011" name="PLoS ONE">
        <title>Functional analysis of the magnetosome island in Magnetospirillum gryphiswaldense: the mamAB operon is sufficient for magnetite biomineralization.</title>
        <authorList>
            <person name="Lohsse A."/>
            <person name="Ullrich S."/>
            <person name="Katzmann E."/>
            <person name="Borg S."/>
            <person name="Wanner G."/>
            <person name="Richter M."/>
            <person name="Voigt B."/>
            <person name="Schweder T."/>
            <person name="Schueler D."/>
        </authorList>
    </citation>
    <scope>PROBABLE OPERON</scope>
    <scope>DISRUPTION PHENOTYPE</scope>
    <source>
        <strain>DSM 6361 / JCM 21280 / NBRC 15271 / MSR-1</strain>
    </source>
</reference>
<reference key="6">
    <citation type="journal article" date="2013" name="Mol. Microbiol.">
        <title>The magnetosome proteins MamX, MamZ and MamH are involved in redox control of magnetite biomineralization in Magnetospirillum gryphiswaldense.</title>
        <authorList>
            <person name="Raschdorf O."/>
            <person name="Mueller F.D."/>
            <person name="Posfai M."/>
            <person name="Plitzko J.M."/>
            <person name="Schueler D."/>
        </authorList>
    </citation>
    <scope>PROBABLE OPERON</scope>
    <source>
        <strain>DSM 6361 / JCM 21280 / NBRC 15271 / MSR-1</strain>
    </source>
</reference>
<reference key="7">
    <citation type="journal article" date="2013" name="BMC Microbiol.">
        <title>MamX encoded by the mamXY operon is involved in control of magnetosome maturation in Magnetospirillum gryphiswaldense MSR-1.</title>
        <authorList>
            <person name="Yang J."/>
            <person name="Li S."/>
            <person name="Huang X."/>
            <person name="Li J."/>
            <person name="Li L."/>
            <person name="Pan Y."/>
            <person name="Li Y."/>
        </authorList>
    </citation>
    <scope>INDUCTION</scope>
    <source>
        <strain>DSM 6361 / JCM 21280 / NBRC 15271 / MSR-1</strain>
    </source>
</reference>
<reference key="8">
    <citation type="journal article" date="2019" name="Appl. Environ. Microbiol.">
        <title>Work Patterns of MamXY Proteins during Magnetosome Formation in Magnetospirillum gryphiswaldense MSR-1.</title>
        <authorList>
            <person name="Wang Q."/>
            <person name="Wu S."/>
            <person name="Li X."/>
            <person name="Zhang T."/>
            <person name="Yang J."/>
            <person name="Wang X."/>
            <person name="Li F."/>
            <person name="Li Y."/>
            <person name="Peng Y."/>
            <person name="Li J."/>
        </authorList>
    </citation>
    <scope>POSSIBLE FUNCTION</scope>
    <scope>PROBABLE INTERACTION WITH MAMX AND MAMZ</scope>
    <scope>SUBCELLULAR LOCATION</scope>
    <scope>INDUCTION</scope>
    <source>
        <strain>DSM 6361 / JCM 21280 / NBRC 15271 / MSR-1</strain>
    </source>
</reference>
<keyword id="KW-0091">Biomineralization</keyword>
<keyword id="KW-0446">Lipid-binding</keyword>
<keyword id="KW-1281">Magnetosome</keyword>
<keyword id="KW-0472">Membrane</keyword>
<keyword id="KW-1185">Reference proteome</keyword>
<keyword id="KW-0812">Transmembrane</keyword>
<keyword id="KW-1133">Transmembrane helix</keyword>
<feature type="chain" id="PRO_0000447812" description="Liposome tubulation protein MamY">
    <location>
        <begin position="1"/>
        <end position="371"/>
    </location>
</feature>
<feature type="topological domain" description="Cytoplasmic" evidence="8">
    <location>
        <begin position="1"/>
        <end position="18"/>
    </location>
</feature>
<feature type="transmembrane region" description="Helical" evidence="2">
    <location>
        <begin position="19"/>
        <end position="39"/>
    </location>
</feature>
<feature type="topological domain" description="Lumenal" evidence="8">
    <location>
        <begin position="40"/>
        <end position="51"/>
    </location>
</feature>
<feature type="transmembrane region" description="Helical" evidence="2">
    <location>
        <begin position="52"/>
        <end position="72"/>
    </location>
</feature>
<feature type="topological domain" description="Cytoplasmic" evidence="8">
    <location>
        <begin position="73"/>
        <end position="371"/>
    </location>
</feature>
<name>MAMY_MAGGM</name>
<evidence type="ECO:0000250" key="1">
    <source>
        <dbReference type="UniProtKB" id="Q2W8K3"/>
    </source>
</evidence>
<evidence type="ECO:0000255" key="2"/>
<evidence type="ECO:0000269" key="3">
    <source>
    </source>
</evidence>
<evidence type="ECO:0000269" key="4">
    <source>
    </source>
</evidence>
<evidence type="ECO:0000269" key="5">
    <source>
    </source>
</evidence>
<evidence type="ECO:0000269" key="6">
    <source>
    </source>
</evidence>
<evidence type="ECO:0000303" key="7">
    <source>
    </source>
</evidence>
<evidence type="ECO:0000305" key="8"/>
<evidence type="ECO:0000305" key="9">
    <source>
    </source>
</evidence>
<evidence type="ECO:0000305" key="10">
    <source>
    </source>
</evidence>
<evidence type="ECO:0000305" key="11">
    <source>
    </source>
</evidence>
<evidence type="ECO:0000305" key="12">
    <source>
    </source>
</evidence>
<gene>
    <name evidence="7" type="primary">mamY</name>
    <name type="ordered locus">MGMSRv2__2321</name>
    <name type="ORF">mgI566</name>
    <name type="ORF">MGR_4150</name>
</gene>
<comment type="function">
    <text evidence="1 12">May be involved in constriction of the cell inner membrane to form mature magnetosomes. Binds cardiolipin and liposomes (By similarity). May function with MamX, MamZ amd Mms6 in biomineralization (Probable).</text>
</comment>
<comment type="subunit">
    <text evidence="6">Probably interacts with MamX and MamZ proteins.</text>
</comment>
<comment type="subcellular location">
    <subcellularLocation>
        <location evidence="12">Magnetosome membrane</location>
        <topology evidence="2">Multi-pass membrane protein</topology>
    </subcellularLocation>
</comment>
<comment type="induction">
    <text evidence="3 5 6 9 10 11">Expressed in exponential phase, peaks about 18 hours (PubMed:20023033, PubMed:24020498). Protein is associated with magnetosomes as they start to develop, rises to a maximum quickly (at protein level) (PubMed:30367002). First gene in the 4 gene mamXY operon (Probable) (PubMed:20023033).</text>
</comment>
<comment type="disruption phenotype">
    <text evidence="4">Deletion of 4 consecutive genes (mamY, mamX, mamZ, ftsZm) leads to cells with an intermediate magnetic response where magnetosomes have short chains of nearly regularly shaped, cubo-octahedral crystals flanked by small particles with poorly defined morphologies.</text>
</comment>
<comment type="miscellaneous">
    <text evidence="8">This bacteria makes up to 60 cubo-octahedral magnetosomes of about 45 nm in diameter which contain membrane-bound crystals of magnetite (Fe(3)O(4)).</text>
</comment>
<comment type="similarity">
    <text evidence="8">Belongs to the magnetosome MamY family.</text>
</comment>